<reference key="1">
    <citation type="journal article" date="2011" name="J. Bacteriol.">
        <title>Comparative genomics of 28 Salmonella enterica isolates: evidence for CRISPR-mediated adaptive sublineage evolution.</title>
        <authorList>
            <person name="Fricke W.F."/>
            <person name="Mammel M.K."/>
            <person name="McDermott P.F."/>
            <person name="Tartera C."/>
            <person name="White D.G."/>
            <person name="Leclerc J.E."/>
            <person name="Ravel J."/>
            <person name="Cebula T.A."/>
        </authorList>
    </citation>
    <scope>NUCLEOTIDE SEQUENCE [LARGE SCALE GENOMIC DNA]</scope>
    <source>
        <strain>CVM19633</strain>
    </source>
</reference>
<sequence>MDYTLTRIDPNGENDRYPLQKQEIVTDPLEQEVNKNVFMGKLHDMVNWGRKNSIWPYNFGLSCCYVEMVTSFTAVHDVARFGAEVLRASPRQADLMVVAGTCFTKMAPVIQRLYDQMLEPKWVISMGACANSGGMYDIYSVVQGVDKFIPVDVYIPGCPPRPEAYMQALMLLQESIGKERRPLSWVVGDQGVYRANMQPERERKRGERIAVTNLRTPDEI</sequence>
<keyword id="KW-0004">4Fe-4S</keyword>
<keyword id="KW-0997">Cell inner membrane</keyword>
<keyword id="KW-1003">Cell membrane</keyword>
<keyword id="KW-0408">Iron</keyword>
<keyword id="KW-0411">Iron-sulfur</keyword>
<keyword id="KW-0472">Membrane</keyword>
<keyword id="KW-0479">Metal-binding</keyword>
<keyword id="KW-0520">NAD</keyword>
<keyword id="KW-0874">Quinone</keyword>
<keyword id="KW-1278">Translocase</keyword>
<keyword id="KW-0813">Transport</keyword>
<keyword id="KW-0830">Ubiquinone</keyword>
<comment type="function">
    <text evidence="1">NDH-1 shuttles electrons from NADH, via FMN and iron-sulfur (Fe-S) centers, to quinones in the respiratory chain. The immediate electron acceptor for the enzyme in this species is believed to be ubiquinone. Couples the redox reaction to proton translocation (for every two electrons transferred, four hydrogen ions are translocated across the cytoplasmic membrane), and thus conserves the redox energy in a proton gradient.</text>
</comment>
<comment type="catalytic activity">
    <reaction evidence="1">
        <text>a quinone + NADH + 5 H(+)(in) = a quinol + NAD(+) + 4 H(+)(out)</text>
        <dbReference type="Rhea" id="RHEA:57888"/>
        <dbReference type="ChEBI" id="CHEBI:15378"/>
        <dbReference type="ChEBI" id="CHEBI:24646"/>
        <dbReference type="ChEBI" id="CHEBI:57540"/>
        <dbReference type="ChEBI" id="CHEBI:57945"/>
        <dbReference type="ChEBI" id="CHEBI:132124"/>
    </reaction>
</comment>
<comment type="cofactor">
    <cofactor evidence="1">
        <name>[4Fe-4S] cluster</name>
        <dbReference type="ChEBI" id="CHEBI:49883"/>
    </cofactor>
    <text evidence="1">Binds 1 [4Fe-4S] cluster.</text>
</comment>
<comment type="subunit">
    <text evidence="1">NDH-1 is composed of 13 different subunits. Subunits NuoB, CD, E, F, and G constitute the peripheral sector of the complex.</text>
</comment>
<comment type="subcellular location">
    <subcellularLocation>
        <location evidence="1">Cell inner membrane</location>
        <topology evidence="1">Peripheral membrane protein</topology>
        <orientation evidence="1">Cytoplasmic side</orientation>
    </subcellularLocation>
</comment>
<comment type="similarity">
    <text evidence="1">Belongs to the complex I 20 kDa subunit family.</text>
</comment>
<name>NUOB_SALSV</name>
<feature type="chain" id="PRO_0000376370" description="NADH-quinone oxidoreductase subunit B">
    <location>
        <begin position="1"/>
        <end position="220"/>
    </location>
</feature>
<feature type="binding site" evidence="1">
    <location>
        <position position="63"/>
    </location>
    <ligand>
        <name>[4Fe-4S] cluster</name>
        <dbReference type="ChEBI" id="CHEBI:49883"/>
    </ligand>
</feature>
<feature type="binding site" evidence="1">
    <location>
        <position position="64"/>
    </location>
    <ligand>
        <name>[4Fe-4S] cluster</name>
        <dbReference type="ChEBI" id="CHEBI:49883"/>
    </ligand>
</feature>
<feature type="binding site" evidence="1">
    <location>
        <position position="129"/>
    </location>
    <ligand>
        <name>[4Fe-4S] cluster</name>
        <dbReference type="ChEBI" id="CHEBI:49883"/>
    </ligand>
</feature>
<feature type="binding site" evidence="1">
    <location>
        <position position="158"/>
    </location>
    <ligand>
        <name>[4Fe-4S] cluster</name>
        <dbReference type="ChEBI" id="CHEBI:49883"/>
    </ligand>
</feature>
<protein>
    <recommendedName>
        <fullName evidence="1">NADH-quinone oxidoreductase subunit B</fullName>
        <ecNumber evidence="1">7.1.1.-</ecNumber>
    </recommendedName>
    <alternativeName>
        <fullName evidence="1">NADH dehydrogenase I subunit B</fullName>
    </alternativeName>
    <alternativeName>
        <fullName evidence="1">NDH-1 subunit B</fullName>
    </alternativeName>
</protein>
<accession>B4TPK9</accession>
<evidence type="ECO:0000255" key="1">
    <source>
        <dbReference type="HAMAP-Rule" id="MF_01356"/>
    </source>
</evidence>
<proteinExistence type="inferred from homology"/>
<dbReference type="EC" id="7.1.1.-" evidence="1"/>
<dbReference type="EMBL" id="CP001127">
    <property type="protein sequence ID" value="ACF91467.1"/>
    <property type="molecule type" value="Genomic_DNA"/>
</dbReference>
<dbReference type="RefSeq" id="WP_000386728.1">
    <property type="nucleotide sequence ID" value="NC_011094.1"/>
</dbReference>
<dbReference type="SMR" id="B4TPK9"/>
<dbReference type="KEGG" id="sew:SeSA_A2555"/>
<dbReference type="HOGENOM" id="CLU_055737_7_3_6"/>
<dbReference type="Proteomes" id="UP000001865">
    <property type="component" value="Chromosome"/>
</dbReference>
<dbReference type="GO" id="GO:0005886">
    <property type="term" value="C:plasma membrane"/>
    <property type="evidence" value="ECO:0007669"/>
    <property type="project" value="UniProtKB-SubCell"/>
</dbReference>
<dbReference type="GO" id="GO:0045271">
    <property type="term" value="C:respiratory chain complex I"/>
    <property type="evidence" value="ECO:0007669"/>
    <property type="project" value="TreeGrafter"/>
</dbReference>
<dbReference type="GO" id="GO:0051539">
    <property type="term" value="F:4 iron, 4 sulfur cluster binding"/>
    <property type="evidence" value="ECO:0007669"/>
    <property type="project" value="UniProtKB-KW"/>
</dbReference>
<dbReference type="GO" id="GO:0005506">
    <property type="term" value="F:iron ion binding"/>
    <property type="evidence" value="ECO:0007669"/>
    <property type="project" value="UniProtKB-UniRule"/>
</dbReference>
<dbReference type="GO" id="GO:0008137">
    <property type="term" value="F:NADH dehydrogenase (ubiquinone) activity"/>
    <property type="evidence" value="ECO:0007669"/>
    <property type="project" value="InterPro"/>
</dbReference>
<dbReference type="GO" id="GO:0050136">
    <property type="term" value="F:NADH:ubiquinone reductase (non-electrogenic) activity"/>
    <property type="evidence" value="ECO:0007669"/>
    <property type="project" value="UniProtKB-UniRule"/>
</dbReference>
<dbReference type="GO" id="GO:0048038">
    <property type="term" value="F:quinone binding"/>
    <property type="evidence" value="ECO:0007669"/>
    <property type="project" value="UniProtKB-KW"/>
</dbReference>
<dbReference type="GO" id="GO:0009060">
    <property type="term" value="P:aerobic respiration"/>
    <property type="evidence" value="ECO:0007669"/>
    <property type="project" value="TreeGrafter"/>
</dbReference>
<dbReference type="GO" id="GO:0015990">
    <property type="term" value="P:electron transport coupled proton transport"/>
    <property type="evidence" value="ECO:0007669"/>
    <property type="project" value="TreeGrafter"/>
</dbReference>
<dbReference type="FunFam" id="3.40.50.12280:FF:000002">
    <property type="entry name" value="NADH-quinone oxidoreductase subunit B"/>
    <property type="match status" value="1"/>
</dbReference>
<dbReference type="Gene3D" id="3.40.50.12280">
    <property type="match status" value="1"/>
</dbReference>
<dbReference type="HAMAP" id="MF_01356">
    <property type="entry name" value="NDH1_NuoB"/>
    <property type="match status" value="1"/>
</dbReference>
<dbReference type="InterPro" id="IPR006137">
    <property type="entry name" value="NADH_UbQ_OxRdtase-like_20kDa"/>
</dbReference>
<dbReference type="InterPro" id="IPR006138">
    <property type="entry name" value="NADH_UQ_OxRdtase_20Kd_su"/>
</dbReference>
<dbReference type="NCBIfam" id="TIGR01957">
    <property type="entry name" value="nuoB_fam"/>
    <property type="match status" value="1"/>
</dbReference>
<dbReference type="NCBIfam" id="NF005012">
    <property type="entry name" value="PRK06411.1"/>
    <property type="match status" value="1"/>
</dbReference>
<dbReference type="PANTHER" id="PTHR11995">
    <property type="entry name" value="NADH DEHYDROGENASE"/>
    <property type="match status" value="1"/>
</dbReference>
<dbReference type="PANTHER" id="PTHR11995:SF14">
    <property type="entry name" value="NADH DEHYDROGENASE [UBIQUINONE] IRON-SULFUR PROTEIN 7, MITOCHONDRIAL"/>
    <property type="match status" value="1"/>
</dbReference>
<dbReference type="Pfam" id="PF01058">
    <property type="entry name" value="Oxidored_q6"/>
    <property type="match status" value="1"/>
</dbReference>
<dbReference type="SUPFAM" id="SSF56770">
    <property type="entry name" value="HydA/Nqo6-like"/>
    <property type="match status" value="1"/>
</dbReference>
<dbReference type="PROSITE" id="PS01150">
    <property type="entry name" value="COMPLEX1_20K"/>
    <property type="match status" value="1"/>
</dbReference>
<organism>
    <name type="scientific">Salmonella schwarzengrund (strain CVM19633)</name>
    <dbReference type="NCBI Taxonomy" id="439843"/>
    <lineage>
        <taxon>Bacteria</taxon>
        <taxon>Pseudomonadati</taxon>
        <taxon>Pseudomonadota</taxon>
        <taxon>Gammaproteobacteria</taxon>
        <taxon>Enterobacterales</taxon>
        <taxon>Enterobacteriaceae</taxon>
        <taxon>Salmonella</taxon>
    </lineage>
</organism>
<gene>
    <name evidence="1" type="primary">nuoB</name>
    <name type="ordered locus">SeSA_A2555</name>
</gene>